<feature type="chain" id="PRO_1000083858" description="Protein-export protein SecB">
    <location>
        <begin position="1"/>
        <end position="171"/>
    </location>
</feature>
<keyword id="KW-0143">Chaperone</keyword>
<keyword id="KW-0963">Cytoplasm</keyword>
<keyword id="KW-0653">Protein transport</keyword>
<keyword id="KW-1185">Reference proteome</keyword>
<keyword id="KW-0811">Translocation</keyword>
<keyword id="KW-0813">Transport</keyword>
<gene>
    <name evidence="1" type="primary">secB</name>
    <name type="ordered locus">GDI2068</name>
    <name type="ordered locus">Gdia_0289</name>
</gene>
<name>SECB_GLUDA</name>
<accession>A9HK92</accession>
<accession>B5ZKX6</accession>
<dbReference type="EMBL" id="AM889285">
    <property type="protein sequence ID" value="CAP56011.1"/>
    <property type="molecule type" value="Genomic_DNA"/>
</dbReference>
<dbReference type="EMBL" id="CP001189">
    <property type="protein sequence ID" value="ACI50086.1"/>
    <property type="molecule type" value="Genomic_DNA"/>
</dbReference>
<dbReference type="RefSeq" id="WP_012225773.1">
    <property type="nucleotide sequence ID" value="NC_010125.1"/>
</dbReference>
<dbReference type="SMR" id="A9HK92"/>
<dbReference type="STRING" id="272568.GDI2068"/>
<dbReference type="KEGG" id="gdi:GDI2068"/>
<dbReference type="KEGG" id="gdj:Gdia_0289"/>
<dbReference type="eggNOG" id="COG1952">
    <property type="taxonomic scope" value="Bacteria"/>
</dbReference>
<dbReference type="HOGENOM" id="CLU_111574_0_0_5"/>
<dbReference type="OrthoDB" id="9795145at2"/>
<dbReference type="Proteomes" id="UP000001176">
    <property type="component" value="Chromosome"/>
</dbReference>
<dbReference type="GO" id="GO:0005737">
    <property type="term" value="C:cytoplasm"/>
    <property type="evidence" value="ECO:0007669"/>
    <property type="project" value="UniProtKB-SubCell"/>
</dbReference>
<dbReference type="GO" id="GO:0051082">
    <property type="term" value="F:unfolded protein binding"/>
    <property type="evidence" value="ECO:0007669"/>
    <property type="project" value="InterPro"/>
</dbReference>
<dbReference type="GO" id="GO:0006457">
    <property type="term" value="P:protein folding"/>
    <property type="evidence" value="ECO:0007669"/>
    <property type="project" value="UniProtKB-UniRule"/>
</dbReference>
<dbReference type="GO" id="GO:0051262">
    <property type="term" value="P:protein tetramerization"/>
    <property type="evidence" value="ECO:0007669"/>
    <property type="project" value="InterPro"/>
</dbReference>
<dbReference type="GO" id="GO:0015031">
    <property type="term" value="P:protein transport"/>
    <property type="evidence" value="ECO:0007669"/>
    <property type="project" value="UniProtKB-UniRule"/>
</dbReference>
<dbReference type="Gene3D" id="3.10.420.10">
    <property type="entry name" value="SecB-like"/>
    <property type="match status" value="1"/>
</dbReference>
<dbReference type="HAMAP" id="MF_00821">
    <property type="entry name" value="SecB"/>
    <property type="match status" value="1"/>
</dbReference>
<dbReference type="InterPro" id="IPR003708">
    <property type="entry name" value="SecB"/>
</dbReference>
<dbReference type="InterPro" id="IPR035958">
    <property type="entry name" value="SecB-like_sf"/>
</dbReference>
<dbReference type="NCBIfam" id="NF004392">
    <property type="entry name" value="PRK05751.1-3"/>
    <property type="match status" value="1"/>
</dbReference>
<dbReference type="NCBIfam" id="TIGR00809">
    <property type="entry name" value="secB"/>
    <property type="match status" value="1"/>
</dbReference>
<dbReference type="PANTHER" id="PTHR36918">
    <property type="match status" value="1"/>
</dbReference>
<dbReference type="PANTHER" id="PTHR36918:SF1">
    <property type="entry name" value="PROTEIN-EXPORT PROTEIN SECB"/>
    <property type="match status" value="1"/>
</dbReference>
<dbReference type="Pfam" id="PF02556">
    <property type="entry name" value="SecB"/>
    <property type="match status" value="1"/>
</dbReference>
<dbReference type="PRINTS" id="PR01594">
    <property type="entry name" value="SECBCHAPRONE"/>
</dbReference>
<dbReference type="SUPFAM" id="SSF54611">
    <property type="entry name" value="SecB-like"/>
    <property type="match status" value="1"/>
</dbReference>
<comment type="function">
    <text evidence="1">One of the proteins required for the normal export of preproteins out of the cell cytoplasm. It is a molecular chaperone that binds to a subset of precursor proteins, maintaining them in a translocation-competent state. It also specifically binds to its receptor SecA.</text>
</comment>
<comment type="subunit">
    <text evidence="1">Homotetramer, a dimer of dimers. One homotetramer interacts with 1 SecA dimer.</text>
</comment>
<comment type="subcellular location">
    <subcellularLocation>
        <location evidence="1">Cytoplasm</location>
    </subcellularLocation>
</comment>
<comment type="similarity">
    <text evidence="1">Belongs to the SecB family.</text>
</comment>
<organism>
    <name type="scientific">Gluconacetobacter diazotrophicus (strain ATCC 49037 / DSM 5601 / CCUG 37298 / CIP 103539 / LMG 7603 / PAl5)</name>
    <dbReference type="NCBI Taxonomy" id="272568"/>
    <lineage>
        <taxon>Bacteria</taxon>
        <taxon>Pseudomonadati</taxon>
        <taxon>Pseudomonadota</taxon>
        <taxon>Alphaproteobacteria</taxon>
        <taxon>Acetobacterales</taxon>
        <taxon>Acetobacteraceae</taxon>
        <taxon>Gluconacetobacter</taxon>
    </lineage>
</organism>
<reference key="1">
    <citation type="journal article" date="2009" name="BMC Genomics">
        <title>Complete genome sequence of the sugarcane nitrogen-fixing endophyte Gluconacetobacter diazotrophicus Pal5.</title>
        <authorList>
            <person name="Bertalan M."/>
            <person name="Albano R."/>
            <person name="de Padua V."/>
            <person name="Rouws L."/>
            <person name="Rojas C."/>
            <person name="Hemerly A."/>
            <person name="Teixeira K."/>
            <person name="Schwab S."/>
            <person name="Araujo J."/>
            <person name="Oliveira A."/>
            <person name="Franca L."/>
            <person name="Magalhaes V."/>
            <person name="Alqueres S."/>
            <person name="Cardoso A."/>
            <person name="Almeida W."/>
            <person name="Loureiro M.M."/>
            <person name="Nogueira E."/>
            <person name="Cidade D."/>
            <person name="Oliveira D."/>
            <person name="Simao T."/>
            <person name="Macedo J."/>
            <person name="Valadao A."/>
            <person name="Dreschsel M."/>
            <person name="Freitas F."/>
            <person name="Vidal M."/>
            <person name="Guedes H."/>
            <person name="Rodrigues E."/>
            <person name="Meneses C."/>
            <person name="Brioso P."/>
            <person name="Pozzer L."/>
            <person name="Figueiredo D."/>
            <person name="Montano H."/>
            <person name="Junior J."/>
            <person name="de Souza Filho G."/>
            <person name="Martin Quintana Flores V."/>
            <person name="Ferreira B."/>
            <person name="Branco A."/>
            <person name="Gonzalez P."/>
            <person name="Guillobel H."/>
            <person name="Lemos M."/>
            <person name="Seibel L."/>
            <person name="Macedo J."/>
            <person name="Alves-Ferreira M."/>
            <person name="Sachetto-Martins G."/>
            <person name="Coelho A."/>
            <person name="Santos E."/>
            <person name="Amaral G."/>
            <person name="Neves A."/>
            <person name="Pacheco A.B."/>
            <person name="Carvalho D."/>
            <person name="Lery L."/>
            <person name="Bisch P."/>
            <person name="Rossle S.C."/>
            <person name="Urmenyi T."/>
            <person name="Rael Pereira A."/>
            <person name="Silva R."/>
            <person name="Rondinelli E."/>
            <person name="von Kruger W."/>
            <person name="Martins O."/>
            <person name="Baldani J.I."/>
            <person name="Ferreira P.C."/>
        </authorList>
    </citation>
    <scope>NUCLEOTIDE SEQUENCE [LARGE SCALE GENOMIC DNA]</scope>
    <source>
        <strain>ATCC 49037 / DSM 5601 / CCUG 37298 / CIP 103539 / LMG 7603 / PAl5</strain>
    </source>
</reference>
<reference key="2">
    <citation type="journal article" date="2010" name="Stand. Genomic Sci.">
        <title>Two genome sequences of the same bacterial strain, Gluconacetobacter diazotrophicus PAl 5, suggest a new standard in genome sequence submission.</title>
        <authorList>
            <person name="Giongo A."/>
            <person name="Tyler H.L."/>
            <person name="Zipperer U.N."/>
            <person name="Triplett E.W."/>
        </authorList>
    </citation>
    <scope>NUCLEOTIDE SEQUENCE [LARGE SCALE GENOMIC DNA]</scope>
    <source>
        <strain>ATCC 49037 / DSM 5601 / CCUG 37298 / CIP 103539 / LMG 7603 / PAl5</strain>
    </source>
</reference>
<proteinExistence type="inferred from homology"/>
<sequence>MSDTTQPPADDAQNVPPAMPLTINVQYIKDLSFEVPAGAEIFATLRANPQIAVNIDVQANRLQAEHPVFEVVLAIKTEALEAPEKEGAAPGRPVFIAELAYGAVVTLTNAPDELVEPILLVEVPRLIFPYVRNIISEVTRDGGFPPVVLQPIDFVALWQAKRSFPQTAGNA</sequence>
<protein>
    <recommendedName>
        <fullName evidence="1">Protein-export protein SecB</fullName>
    </recommendedName>
</protein>
<evidence type="ECO:0000255" key="1">
    <source>
        <dbReference type="HAMAP-Rule" id="MF_00821"/>
    </source>
</evidence>